<organism>
    <name type="scientific">Chlorobium phaeobacteroides (strain BS1)</name>
    <dbReference type="NCBI Taxonomy" id="331678"/>
    <lineage>
        <taxon>Bacteria</taxon>
        <taxon>Pseudomonadati</taxon>
        <taxon>Chlorobiota</taxon>
        <taxon>Chlorobiia</taxon>
        <taxon>Chlorobiales</taxon>
        <taxon>Chlorobiaceae</taxon>
        <taxon>Chlorobium/Pelodictyon group</taxon>
        <taxon>Chlorobium</taxon>
    </lineage>
</organism>
<comment type="function">
    <text evidence="1">Catalyzes the ATP-dependent conversion of 7-carboxy-7-deazaguanine (CDG) to 7-cyano-7-deazaguanine (preQ(0)).</text>
</comment>
<comment type="catalytic activity">
    <reaction evidence="1">
        <text>7-carboxy-7-deazaguanine + NH4(+) + ATP = 7-cyano-7-deazaguanine + ADP + phosphate + H2O + H(+)</text>
        <dbReference type="Rhea" id="RHEA:27982"/>
        <dbReference type="ChEBI" id="CHEBI:15377"/>
        <dbReference type="ChEBI" id="CHEBI:15378"/>
        <dbReference type="ChEBI" id="CHEBI:28938"/>
        <dbReference type="ChEBI" id="CHEBI:30616"/>
        <dbReference type="ChEBI" id="CHEBI:43474"/>
        <dbReference type="ChEBI" id="CHEBI:45075"/>
        <dbReference type="ChEBI" id="CHEBI:61036"/>
        <dbReference type="ChEBI" id="CHEBI:456216"/>
        <dbReference type="EC" id="6.3.4.20"/>
    </reaction>
</comment>
<comment type="cofactor">
    <cofactor evidence="1">
        <name>Zn(2+)</name>
        <dbReference type="ChEBI" id="CHEBI:29105"/>
    </cofactor>
    <text evidence="1">Binds 1 zinc ion per subunit.</text>
</comment>
<comment type="pathway">
    <text evidence="1">Purine metabolism; 7-cyano-7-deazaguanine biosynthesis.</text>
</comment>
<comment type="similarity">
    <text evidence="1">Belongs to the QueC family.</text>
</comment>
<name>QUEC_CHLPB</name>
<protein>
    <recommendedName>
        <fullName evidence="1">7-cyano-7-deazaguanine synthase</fullName>
        <ecNumber evidence="1">6.3.4.20</ecNumber>
    </recommendedName>
    <alternativeName>
        <fullName evidence="1">7-cyano-7-carbaguanine synthase</fullName>
    </alternativeName>
    <alternativeName>
        <fullName evidence="1">PreQ(0) synthase</fullName>
    </alternativeName>
    <alternativeName>
        <fullName evidence="1">Queuosine biosynthesis protein QueC</fullName>
    </alternativeName>
</protein>
<reference key="1">
    <citation type="submission" date="2008-06" db="EMBL/GenBank/DDBJ databases">
        <title>Complete sequence of Chlorobium phaeobacteroides BS1.</title>
        <authorList>
            <consortium name="US DOE Joint Genome Institute"/>
            <person name="Lucas S."/>
            <person name="Copeland A."/>
            <person name="Lapidus A."/>
            <person name="Glavina del Rio T."/>
            <person name="Dalin E."/>
            <person name="Tice H."/>
            <person name="Bruce D."/>
            <person name="Goodwin L."/>
            <person name="Pitluck S."/>
            <person name="Schmutz J."/>
            <person name="Larimer F."/>
            <person name="Land M."/>
            <person name="Hauser L."/>
            <person name="Kyrpides N."/>
            <person name="Ovchinnikova G."/>
            <person name="Li T."/>
            <person name="Liu Z."/>
            <person name="Zhao F."/>
            <person name="Overmann J."/>
            <person name="Bryant D.A."/>
            <person name="Richardson P."/>
        </authorList>
    </citation>
    <scope>NUCLEOTIDE SEQUENCE [LARGE SCALE GENOMIC DNA]</scope>
    <source>
        <strain>BS1</strain>
    </source>
</reference>
<proteinExistence type="inferred from homology"/>
<gene>
    <name evidence="1" type="primary">queC</name>
    <name type="ordered locus">Cphamn1_0784</name>
</gene>
<accession>B3ENV8</accession>
<keyword id="KW-0067">ATP-binding</keyword>
<keyword id="KW-0436">Ligase</keyword>
<keyword id="KW-0479">Metal-binding</keyword>
<keyword id="KW-0547">Nucleotide-binding</keyword>
<keyword id="KW-0671">Queuosine biosynthesis</keyword>
<keyword id="KW-0862">Zinc</keyword>
<evidence type="ECO:0000255" key="1">
    <source>
        <dbReference type="HAMAP-Rule" id="MF_01633"/>
    </source>
</evidence>
<feature type="chain" id="PRO_1000186574" description="7-cyano-7-deazaguanine synthase">
    <location>
        <begin position="1"/>
        <end position="226"/>
    </location>
</feature>
<feature type="binding site" evidence="1">
    <location>
        <begin position="7"/>
        <end position="17"/>
    </location>
    <ligand>
        <name>ATP</name>
        <dbReference type="ChEBI" id="CHEBI:30616"/>
    </ligand>
</feature>
<feature type="binding site" evidence="1">
    <location>
        <position position="187"/>
    </location>
    <ligand>
        <name>Zn(2+)</name>
        <dbReference type="ChEBI" id="CHEBI:29105"/>
    </ligand>
</feature>
<feature type="binding site" evidence="1">
    <location>
        <position position="195"/>
    </location>
    <ligand>
        <name>Zn(2+)</name>
        <dbReference type="ChEBI" id="CHEBI:29105"/>
    </ligand>
</feature>
<feature type="binding site" evidence="1">
    <location>
        <position position="198"/>
    </location>
    <ligand>
        <name>Zn(2+)</name>
        <dbReference type="ChEBI" id="CHEBI:29105"/>
    </ligand>
</feature>
<feature type="binding site" evidence="1">
    <location>
        <position position="201"/>
    </location>
    <ligand>
        <name>Zn(2+)</name>
        <dbReference type="ChEBI" id="CHEBI:29105"/>
    </ligand>
</feature>
<dbReference type="EC" id="6.3.4.20" evidence="1"/>
<dbReference type="EMBL" id="CP001101">
    <property type="protein sequence ID" value="ACE03735.1"/>
    <property type="molecule type" value="Genomic_DNA"/>
</dbReference>
<dbReference type="SMR" id="B3ENV8"/>
<dbReference type="STRING" id="331678.Cphamn1_0784"/>
<dbReference type="KEGG" id="cpb:Cphamn1_0784"/>
<dbReference type="eggNOG" id="COG0603">
    <property type="taxonomic scope" value="Bacteria"/>
</dbReference>
<dbReference type="HOGENOM" id="CLU_081854_1_0_10"/>
<dbReference type="OrthoDB" id="9789567at2"/>
<dbReference type="UniPathway" id="UPA00391"/>
<dbReference type="GO" id="GO:0005524">
    <property type="term" value="F:ATP binding"/>
    <property type="evidence" value="ECO:0007669"/>
    <property type="project" value="UniProtKB-UniRule"/>
</dbReference>
<dbReference type="GO" id="GO:0016879">
    <property type="term" value="F:ligase activity, forming carbon-nitrogen bonds"/>
    <property type="evidence" value="ECO:0007669"/>
    <property type="project" value="UniProtKB-UniRule"/>
</dbReference>
<dbReference type="GO" id="GO:0008270">
    <property type="term" value="F:zinc ion binding"/>
    <property type="evidence" value="ECO:0007669"/>
    <property type="project" value="UniProtKB-UniRule"/>
</dbReference>
<dbReference type="GO" id="GO:0008616">
    <property type="term" value="P:queuosine biosynthetic process"/>
    <property type="evidence" value="ECO:0007669"/>
    <property type="project" value="UniProtKB-UniRule"/>
</dbReference>
<dbReference type="CDD" id="cd01995">
    <property type="entry name" value="QueC-like"/>
    <property type="match status" value="1"/>
</dbReference>
<dbReference type="Gene3D" id="3.40.50.620">
    <property type="entry name" value="HUPs"/>
    <property type="match status" value="1"/>
</dbReference>
<dbReference type="HAMAP" id="MF_01633">
    <property type="entry name" value="QueC"/>
    <property type="match status" value="1"/>
</dbReference>
<dbReference type="InterPro" id="IPR018317">
    <property type="entry name" value="QueC"/>
</dbReference>
<dbReference type="InterPro" id="IPR014729">
    <property type="entry name" value="Rossmann-like_a/b/a_fold"/>
</dbReference>
<dbReference type="NCBIfam" id="TIGR00364">
    <property type="entry name" value="7-cyano-7-deazaguanine synthase QueC"/>
    <property type="match status" value="1"/>
</dbReference>
<dbReference type="PANTHER" id="PTHR42914">
    <property type="entry name" value="7-CYANO-7-DEAZAGUANINE SYNTHASE"/>
    <property type="match status" value="1"/>
</dbReference>
<dbReference type="PANTHER" id="PTHR42914:SF1">
    <property type="entry name" value="7-CYANO-7-DEAZAGUANINE SYNTHASE"/>
    <property type="match status" value="1"/>
</dbReference>
<dbReference type="Pfam" id="PF06508">
    <property type="entry name" value="QueC"/>
    <property type="match status" value="1"/>
</dbReference>
<dbReference type="PIRSF" id="PIRSF006293">
    <property type="entry name" value="ExsB"/>
    <property type="match status" value="1"/>
</dbReference>
<dbReference type="SUPFAM" id="SSF52402">
    <property type="entry name" value="Adenine nucleotide alpha hydrolases-like"/>
    <property type="match status" value="1"/>
</dbReference>
<sequence length="226" mass="25228">MRAVVLISGGMDSLVVAAQARALGYELAAMHVNYGQRTWQKELTAFRRICSHYAIERKLEVDAAYLEHIGGSSLTDSSIPVEQADLQTVAIPSSYVPFRNASFLSMAVSWSEVIGAERIFIGAVEEDSSGYPDCRKIFYDAFNKVIELGTKPETTIEIRTPLIDLQKSEIVRKGVELDVPFFHSWSCYKSEGKACGLCDSCARRLRAFQLVGLDDPIDYEVRPDYI</sequence>